<organism>
    <name type="scientific">Dictyostelium discoideum</name>
    <name type="common">Social amoeba</name>
    <dbReference type="NCBI Taxonomy" id="44689"/>
    <lineage>
        <taxon>Eukaryota</taxon>
        <taxon>Amoebozoa</taxon>
        <taxon>Evosea</taxon>
        <taxon>Eumycetozoa</taxon>
        <taxon>Dictyostelia</taxon>
        <taxon>Dictyosteliales</taxon>
        <taxon>Dictyosteliaceae</taxon>
        <taxon>Dictyostelium</taxon>
    </lineage>
</organism>
<gene>
    <name type="ORF">DDB_G0272530</name>
</gene>
<evidence type="ECO:0000255" key="1"/>
<evidence type="ECO:0000269" key="2">
    <source>
    </source>
</evidence>
<evidence type="ECO:0000305" key="3"/>
<comment type="subcellular location">
    <subcellularLocation>
        <location evidence="3">Secreted</location>
    </subcellularLocation>
</comment>
<comment type="developmental stage">
    <text evidence="2">Expressed in pstO cells (and not in pstA cells) throughout development.</text>
</comment>
<accession>Q559I8</accession>
<protein>
    <recommendedName>
        <fullName>Uncharacterized protein DDB_G0272530</fullName>
    </recommendedName>
</protein>
<reference key="1">
    <citation type="journal article" date="2002" name="Nature">
        <title>Sequence and analysis of chromosome 2 of Dictyostelium discoideum.</title>
        <authorList>
            <person name="Gloeckner G."/>
            <person name="Eichinger L."/>
            <person name="Szafranski K."/>
            <person name="Pachebat J.A."/>
            <person name="Bankier A.T."/>
            <person name="Dear P.H."/>
            <person name="Lehmann R."/>
            <person name="Baumgart C."/>
            <person name="Parra G."/>
            <person name="Abril J.F."/>
            <person name="Guigo R."/>
            <person name="Kumpf K."/>
            <person name="Tunggal B."/>
            <person name="Cox E.C."/>
            <person name="Quail M.A."/>
            <person name="Platzer M."/>
            <person name="Rosenthal A."/>
            <person name="Noegel A.A."/>
        </authorList>
    </citation>
    <scope>NUCLEOTIDE SEQUENCE [LARGE SCALE GENOMIC DNA]</scope>
    <source>
        <strain>AX4</strain>
    </source>
</reference>
<reference key="2">
    <citation type="journal article" date="2005" name="Nature">
        <title>The genome of the social amoeba Dictyostelium discoideum.</title>
        <authorList>
            <person name="Eichinger L."/>
            <person name="Pachebat J.A."/>
            <person name="Gloeckner G."/>
            <person name="Rajandream M.A."/>
            <person name="Sucgang R."/>
            <person name="Berriman M."/>
            <person name="Song J."/>
            <person name="Olsen R."/>
            <person name="Szafranski K."/>
            <person name="Xu Q."/>
            <person name="Tunggal B."/>
            <person name="Kummerfeld S."/>
            <person name="Madera M."/>
            <person name="Konfortov B.A."/>
            <person name="Rivero F."/>
            <person name="Bankier A.T."/>
            <person name="Lehmann R."/>
            <person name="Hamlin N."/>
            <person name="Davies R."/>
            <person name="Gaudet P."/>
            <person name="Fey P."/>
            <person name="Pilcher K."/>
            <person name="Chen G."/>
            <person name="Saunders D."/>
            <person name="Sodergren E.J."/>
            <person name="Davis P."/>
            <person name="Kerhornou A."/>
            <person name="Nie X."/>
            <person name="Hall N."/>
            <person name="Anjard C."/>
            <person name="Hemphill L."/>
            <person name="Bason N."/>
            <person name="Farbrother P."/>
            <person name="Desany B."/>
            <person name="Just E."/>
            <person name="Morio T."/>
            <person name="Rost R."/>
            <person name="Churcher C.M."/>
            <person name="Cooper J."/>
            <person name="Haydock S."/>
            <person name="van Driessche N."/>
            <person name="Cronin A."/>
            <person name="Goodhead I."/>
            <person name="Muzny D.M."/>
            <person name="Mourier T."/>
            <person name="Pain A."/>
            <person name="Lu M."/>
            <person name="Harper D."/>
            <person name="Lindsay R."/>
            <person name="Hauser H."/>
            <person name="James K.D."/>
            <person name="Quiles M."/>
            <person name="Madan Babu M."/>
            <person name="Saito T."/>
            <person name="Buchrieser C."/>
            <person name="Wardroper A."/>
            <person name="Felder M."/>
            <person name="Thangavelu M."/>
            <person name="Johnson D."/>
            <person name="Knights A."/>
            <person name="Loulseged H."/>
            <person name="Mungall K.L."/>
            <person name="Oliver K."/>
            <person name="Price C."/>
            <person name="Quail M.A."/>
            <person name="Urushihara H."/>
            <person name="Hernandez J."/>
            <person name="Rabbinowitsch E."/>
            <person name="Steffen D."/>
            <person name="Sanders M."/>
            <person name="Ma J."/>
            <person name="Kohara Y."/>
            <person name="Sharp S."/>
            <person name="Simmonds M.N."/>
            <person name="Spiegler S."/>
            <person name="Tivey A."/>
            <person name="Sugano S."/>
            <person name="White B."/>
            <person name="Walker D."/>
            <person name="Woodward J.R."/>
            <person name="Winckler T."/>
            <person name="Tanaka Y."/>
            <person name="Shaulsky G."/>
            <person name="Schleicher M."/>
            <person name="Weinstock G.M."/>
            <person name="Rosenthal A."/>
            <person name="Cox E.C."/>
            <person name="Chisholm R.L."/>
            <person name="Gibbs R.A."/>
            <person name="Loomis W.F."/>
            <person name="Platzer M."/>
            <person name="Kay R.R."/>
            <person name="Williams J.G."/>
            <person name="Dear P.H."/>
            <person name="Noegel A.A."/>
            <person name="Barrell B.G."/>
            <person name="Kuspa A."/>
        </authorList>
    </citation>
    <scope>NUCLEOTIDE SEQUENCE [LARGE SCALE GENOMIC DNA]</scope>
    <source>
        <strain>AX4</strain>
    </source>
</reference>
<reference key="3">
    <citation type="journal article" date="2003" name="Eukaryot. Cell">
        <title>Changing patterns of gene expression in Dictyostelium prestalk cell subtypes recognized by in situ hybridization with genes from microarray analyses.</title>
        <authorList>
            <person name="Maeda M."/>
            <person name="Sakamoto H."/>
            <person name="Iranfar N."/>
            <person name="Fuller D."/>
            <person name="Maruo T."/>
            <person name="Ogihara S."/>
            <person name="Morio T."/>
            <person name="Urushihara H."/>
            <person name="Tanaka Y."/>
            <person name="Loomis W.F."/>
        </authorList>
    </citation>
    <scope>DEVELOPMENTAL STAGE [LARGE SCALE ANALYSIS]</scope>
</reference>
<proteinExistence type="evidence at transcript level"/>
<feature type="signal peptide" evidence="1">
    <location>
        <begin position="1"/>
        <end position="21"/>
    </location>
</feature>
<feature type="chain" id="PRO_0000392618" description="Uncharacterized protein DDB_G0272530">
    <location>
        <begin position="22"/>
        <end position="301"/>
    </location>
</feature>
<feature type="glycosylation site" description="N-linked (GlcNAc...) asparagine" evidence="1">
    <location>
        <position position="19"/>
    </location>
</feature>
<feature type="glycosylation site" description="N-linked (GlcNAc...) asparagine" evidence="1">
    <location>
        <position position="59"/>
    </location>
</feature>
<feature type="glycosylation site" description="N-linked (GlcNAc...) asparagine" evidence="1">
    <location>
        <position position="102"/>
    </location>
</feature>
<feature type="glycosylation site" description="N-linked (GlcNAc...) asparagine" evidence="1">
    <location>
        <position position="180"/>
    </location>
</feature>
<name>Y2530_DICDI</name>
<sequence length="301" mass="32706">MKIKLILVLIVFLTIVNVNNSIDLCLSNPKKALVNQACKYSTDCEYPLFCGSGNGYGKNATCSKNIETGGSCESNNQCTPCNVCFNAKCKVKLYLGDACDENKSYCSSSVCIKGKCSIQGDVCTANNQCKFNNYCKSGKCVPLEKEGSSCDKDSSCSLTNACVGGKCVTKYQKPLGAVCNSSNECQVFSGHVCGANGKCSVYNQLLSKCKENSDCGPNGMCMCKSETENVCVDLSVGALKNDKCPSLLSSFSSCMTRERCTENTPTGCPKCYPIFMCYQYSCFYMNQFIRSTQNYYKSFCS</sequence>
<keyword id="KW-0325">Glycoprotein</keyword>
<keyword id="KW-1185">Reference proteome</keyword>
<keyword id="KW-0964">Secreted</keyword>
<keyword id="KW-0732">Signal</keyword>
<dbReference type="EMBL" id="AAFI02000008">
    <property type="protein sequence ID" value="EAL71189.1"/>
    <property type="molecule type" value="Genomic_DNA"/>
</dbReference>
<dbReference type="RefSeq" id="XP_645118.1">
    <property type="nucleotide sequence ID" value="XM_640026.1"/>
</dbReference>
<dbReference type="SMR" id="Q559I8"/>
<dbReference type="GlyGen" id="Q559I8">
    <property type="glycosylation" value="4 sites"/>
</dbReference>
<dbReference type="PaxDb" id="44689-DDB0229929"/>
<dbReference type="EnsemblProtists" id="EAL71189">
    <property type="protein sequence ID" value="EAL71189"/>
    <property type="gene ID" value="DDB_G0272530"/>
</dbReference>
<dbReference type="GeneID" id="8618513"/>
<dbReference type="KEGG" id="ddi:DDB_G0272530"/>
<dbReference type="dictyBase" id="DDB_G0272530"/>
<dbReference type="VEuPathDB" id="AmoebaDB:DDB_G0272530"/>
<dbReference type="eggNOG" id="ENOG502R98R">
    <property type="taxonomic scope" value="Eukaryota"/>
</dbReference>
<dbReference type="HOGENOM" id="CLU_925680_0_0_1"/>
<dbReference type="InParanoid" id="Q559I8"/>
<dbReference type="PhylomeDB" id="Q559I8"/>
<dbReference type="PRO" id="PR:Q559I8"/>
<dbReference type="Proteomes" id="UP000002195">
    <property type="component" value="Chromosome 2"/>
</dbReference>
<dbReference type="GO" id="GO:0005615">
    <property type="term" value="C:extracellular space"/>
    <property type="evidence" value="ECO:0000318"/>
    <property type="project" value="GO_Central"/>
</dbReference>
<dbReference type="GO" id="GO:0039706">
    <property type="term" value="F:co-receptor binding"/>
    <property type="evidence" value="ECO:0000318"/>
    <property type="project" value="GO_Central"/>
</dbReference>
<dbReference type="GO" id="GO:0048019">
    <property type="term" value="F:receptor antagonist activity"/>
    <property type="evidence" value="ECO:0000318"/>
    <property type="project" value="GO_Central"/>
</dbReference>
<dbReference type="GO" id="GO:0090090">
    <property type="term" value="P:negative regulation of canonical Wnt signaling pathway"/>
    <property type="evidence" value="ECO:0000318"/>
    <property type="project" value="GO_Central"/>
</dbReference>
<dbReference type="InterPro" id="IPR052326">
    <property type="entry name" value="Diff-Dev_Assoc_Protein"/>
</dbReference>
<dbReference type="InterPro" id="IPR055531">
    <property type="entry name" value="DUF7107"/>
</dbReference>
<dbReference type="PANTHER" id="PTHR33459">
    <property type="entry name" value="DD-GDCA PROTEIN"/>
    <property type="match status" value="1"/>
</dbReference>
<dbReference type="PANTHER" id="PTHR33459:SF19">
    <property type="entry name" value="DICKKOPF N-TERMINAL CYSTEINE-RICH DOMAIN-CONTAINING PROTEIN"/>
    <property type="match status" value="1"/>
</dbReference>
<dbReference type="Pfam" id="PF23416">
    <property type="entry name" value="DUF7107"/>
    <property type="match status" value="1"/>
</dbReference>